<protein>
    <recommendedName>
        <fullName>Probable DNA-directed RNA polymerase II subunit RPB11</fullName>
        <shortName>RNA polymerase II subunit B11</shortName>
    </recommendedName>
    <alternativeName>
        <fullName>DNA-directed RNA polymerase II subunit J</fullName>
    </alternativeName>
</protein>
<name>RPB11_PLACU</name>
<reference evidence="4" key="1">
    <citation type="journal article" date="2014" name="BMC Biol.">
        <title>A comprehensive evaluation of rodent malaria parasite genomes and gene expression.</title>
        <authorList>
            <person name="Otto T.D."/>
            <person name="Bohme U."/>
            <person name="Jackson A.P."/>
            <person name="Hunt M."/>
            <person name="Franke-Fayard B."/>
            <person name="Hoeijmakers W.A."/>
            <person name="Religa A.A."/>
            <person name="Robertson L."/>
            <person name="Sanders M."/>
            <person name="Ogun S.A."/>
            <person name="Cunningham D."/>
            <person name="Erhart A."/>
            <person name="Billker O."/>
            <person name="Khan S.M."/>
            <person name="Stunnenberg H.G."/>
            <person name="Langhorne J."/>
            <person name="Holder A.A."/>
            <person name="Waters A.P."/>
            <person name="Newbold C.I."/>
            <person name="Pain A."/>
            <person name="Berriman M."/>
            <person name="Janse C.J."/>
        </authorList>
    </citation>
    <scope>NUCLEOTIDE SEQUENCE [LARGE SCALE GENOMIC DNA]</scope>
    <source>
        <strain evidence="4">AS</strain>
    </source>
</reference>
<reference evidence="5" key="2">
    <citation type="submission" date="2016-08" db="EMBL/GenBank/DDBJ databases">
        <authorList>
            <consortium name="Pathogen Informatics"/>
        </authorList>
    </citation>
    <scope>NUCLEOTIDE SEQUENCE [LARGE SCALE GENOMIC DNA]</scope>
    <source>
        <strain>AJ</strain>
        <strain evidence="5">CB</strain>
    </source>
</reference>
<proteinExistence type="inferred from homology"/>
<sequence length="126" mass="14224">MSVPTLSNKPENVDLLVLPHGEEKVKCQISDKGDCNIFTIKLEDHTIGNLIKQSLCQDPKVTFAAYRQPHPLQNAIEITIRPKGYAGVKLLSDNVHSILNQVSTLRETFANRVQKYKEKNAYHGNR</sequence>
<organism evidence="4">
    <name type="scientific">Plasmodium chabaudi chabaudi</name>
    <dbReference type="NCBI Taxonomy" id="31271"/>
    <lineage>
        <taxon>Eukaryota</taxon>
        <taxon>Sar</taxon>
        <taxon>Alveolata</taxon>
        <taxon>Apicomplexa</taxon>
        <taxon>Aconoidasida</taxon>
        <taxon>Haemosporida</taxon>
        <taxon>Plasmodiidae</taxon>
        <taxon>Plasmodium</taxon>
        <taxon>Plasmodium (Vinckeia)</taxon>
    </lineage>
</organism>
<accession>Q4XS21</accession>
<accession>A0A077TQA8</accession>
<gene>
    <name type="ORF">PC000833.03.0</name>
    <name evidence="3" type="ORF">PCHAS_1405300</name>
</gene>
<evidence type="ECO:0000250" key="1"/>
<evidence type="ECO:0000305" key="2"/>
<evidence type="ECO:0000312" key="3">
    <source>
        <dbReference type="EMBL" id="VTZ70729.1"/>
    </source>
</evidence>
<evidence type="ECO:0000312" key="4">
    <source>
        <dbReference type="Proteomes" id="UP000071118"/>
    </source>
</evidence>
<evidence type="ECO:0000312" key="5">
    <source>
        <dbReference type="Proteomes" id="UP000195489"/>
    </source>
</evidence>
<comment type="function">
    <text evidence="1">DNA-dependent RNA polymerase catalyzes the transcription of DNA into RNA using the four ribonucleoside triphosphates as substrates. Component of RNA polymerase II which synthesizes mRNA precursors and many functional non-coding RNAs. Pol II is the central component of the basal RNA polymerase II transcription machinery. It is composed of mobile elements that move relative to each other. RPB11 is part of the core element with the central large cleft (By similarity).</text>
</comment>
<comment type="subunit">
    <text evidence="1">Component of the RNA polymerase II (Pol II) complex consisting of 12 subunits.</text>
</comment>
<comment type="subcellular location">
    <subcellularLocation>
        <location evidence="1">Nucleus</location>
    </subcellularLocation>
</comment>
<comment type="similarity">
    <text evidence="2">Belongs to the archaeal Rpo11/eukaryotic RPB11/RPC19 RNA polymerase subunit family.</text>
</comment>
<dbReference type="EMBL" id="LK022891">
    <property type="protein sequence ID" value="VTZ70729.1"/>
    <property type="molecule type" value="Genomic_DNA"/>
</dbReference>
<dbReference type="EMBL" id="LT608180">
    <property type="protein sequence ID" value="SCM25852.1"/>
    <property type="molecule type" value="Genomic_DNA"/>
</dbReference>
<dbReference type="EMBL" id="LT608166">
    <property type="protein sequence ID" value="SCN62607.1"/>
    <property type="molecule type" value="Genomic_DNA"/>
</dbReference>
<dbReference type="RefSeq" id="XP_743717.1">
    <property type="nucleotide sequence ID" value="XM_738624.1"/>
</dbReference>
<dbReference type="SMR" id="Q4XS21"/>
<dbReference type="EnsemblProtists" id="CDR16318">
    <property type="protein sequence ID" value="CDR16318"/>
    <property type="gene ID" value="PCHAS_140530"/>
</dbReference>
<dbReference type="GeneID" id="3496824"/>
<dbReference type="KEGG" id="pcb:PCHAS_1405300"/>
<dbReference type="VEuPathDB" id="PlasmoDB:PCHAS_1405300"/>
<dbReference type="eggNOG" id="KOG4392">
    <property type="taxonomic scope" value="Eukaryota"/>
</dbReference>
<dbReference type="HOGENOM" id="CLU_090381_2_1_1"/>
<dbReference type="OrthoDB" id="10248581at2759"/>
<dbReference type="Proteomes" id="UP000071118">
    <property type="component" value="Chromosome 14"/>
</dbReference>
<dbReference type="Proteomes" id="UP000195489">
    <property type="component" value="Chromosome 14"/>
</dbReference>
<dbReference type="Proteomes" id="UP000507163">
    <property type="component" value="Chromosome 14"/>
</dbReference>
<dbReference type="GO" id="GO:0005665">
    <property type="term" value="C:RNA polymerase II, core complex"/>
    <property type="evidence" value="ECO:0007669"/>
    <property type="project" value="InterPro"/>
</dbReference>
<dbReference type="GO" id="GO:0003677">
    <property type="term" value="F:DNA binding"/>
    <property type="evidence" value="ECO:0007669"/>
    <property type="project" value="InterPro"/>
</dbReference>
<dbReference type="GO" id="GO:0003899">
    <property type="term" value="F:DNA-directed RNA polymerase activity"/>
    <property type="evidence" value="ECO:0007669"/>
    <property type="project" value="InterPro"/>
</dbReference>
<dbReference type="GO" id="GO:0046983">
    <property type="term" value="F:protein dimerization activity"/>
    <property type="evidence" value="ECO:0007669"/>
    <property type="project" value="InterPro"/>
</dbReference>
<dbReference type="GO" id="GO:0006366">
    <property type="term" value="P:transcription by RNA polymerase II"/>
    <property type="evidence" value="ECO:0007669"/>
    <property type="project" value="InterPro"/>
</dbReference>
<dbReference type="CDD" id="cd06926">
    <property type="entry name" value="RNAP_II_RPB11"/>
    <property type="match status" value="1"/>
</dbReference>
<dbReference type="Gene3D" id="3.30.1360.10">
    <property type="entry name" value="RNA polymerase, RBP11-like subunit"/>
    <property type="match status" value="1"/>
</dbReference>
<dbReference type="InterPro" id="IPR037685">
    <property type="entry name" value="RBP11"/>
</dbReference>
<dbReference type="InterPro" id="IPR036603">
    <property type="entry name" value="RBP11-like"/>
</dbReference>
<dbReference type="InterPro" id="IPR009025">
    <property type="entry name" value="RBP11-like_dimer"/>
</dbReference>
<dbReference type="InterPro" id="IPR008193">
    <property type="entry name" value="RNA_pol_Rpb11_13-16kDa_CS"/>
</dbReference>
<dbReference type="PANTHER" id="PTHR13946">
    <property type="entry name" value="DNA-DIRECTED RNA POLYMERASE I,II,III"/>
    <property type="match status" value="1"/>
</dbReference>
<dbReference type="PANTHER" id="PTHR13946:SF16">
    <property type="entry name" value="DNA-DIRECTED RNA POLYMERASE II SUBUNIT RPB11"/>
    <property type="match status" value="1"/>
</dbReference>
<dbReference type="Pfam" id="PF13656">
    <property type="entry name" value="RNA_pol_L_2"/>
    <property type="match status" value="1"/>
</dbReference>
<dbReference type="SUPFAM" id="SSF55257">
    <property type="entry name" value="RBP11-like subunits of RNA polymerase"/>
    <property type="match status" value="1"/>
</dbReference>
<dbReference type="PROSITE" id="PS01154">
    <property type="entry name" value="RNA_POL_L_13KD"/>
    <property type="match status" value="1"/>
</dbReference>
<feature type="chain" id="PRO_0000232463" description="Probable DNA-directed RNA polymerase II subunit RPB11">
    <location>
        <begin position="1"/>
        <end position="126"/>
    </location>
</feature>
<keyword id="KW-0240">DNA-directed RNA polymerase</keyword>
<keyword id="KW-0539">Nucleus</keyword>
<keyword id="KW-0804">Transcription</keyword>